<sequence>MSLRPSTRAELRKKIYKTGVDADEARRRREDNLVEIRKNKREDSLLKKRREGMMLQQQLPLGAGLDGPQTAAAVEKRLEGIPMMVQGVYSDDPQAQLEATTQFRKLLSIERSPPIDEVIKAGVIPRFVEFLGRHDHPQLQFEAAWALTNVASGTSDHTRVVIEQGAVPIFVKLLTSASDDVREQAVWALGNVAGDSPNCRNLVLNYGALEPLLAQLNENSKLSMLRNATWTLSNFCRGKPPTPFEQVKPALPILRQLIYLNDEEVLTDACWALSYLSDGPNDKIQAVIEAGVCPRLVELLGHQSPTVLIPALRTVGNIVTGDDSQTQFIIESGVLPHLYNLLTQNHKKSIKKEACWTISNITAGNKLQIEAVVGAGIILPLVHLLQNAEFDIKKEAAWAISNATSGGSHEQIQYLVTQGCIKPLCDLLICPDPRIVTVCLEGLENILKVGEADKEMGLNSGVNLYAQIIEESDGLDKVENLQSHDNNEIYEKAVKILERYWAEEEEEQILQDGGNDNSQQAFNFGNNPAAPVGGFKFA</sequence>
<organism>
    <name type="scientific">Arabidopsis thaliana</name>
    <name type="common">Mouse-ear cress</name>
    <dbReference type="NCBI Taxonomy" id="3702"/>
    <lineage>
        <taxon>Eukaryota</taxon>
        <taxon>Viridiplantae</taxon>
        <taxon>Streptophyta</taxon>
        <taxon>Embryophyta</taxon>
        <taxon>Tracheophyta</taxon>
        <taxon>Spermatophyta</taxon>
        <taxon>Magnoliopsida</taxon>
        <taxon>eudicotyledons</taxon>
        <taxon>Gunneridae</taxon>
        <taxon>Pentapetalae</taxon>
        <taxon>rosids</taxon>
        <taxon>malvids</taxon>
        <taxon>Brassicales</taxon>
        <taxon>Brassicaceae</taxon>
        <taxon>Camelineae</taxon>
        <taxon>Arabidopsis</taxon>
    </lineage>
</organism>
<comment type="function">
    <text evidence="4">Binds to conventional NLS motifs and mediates nuclear protein import across the nuclear envelope. Acts as a cellular receptor for the nuclear import of the virD2 protein of Agrobacterium and is essential for Agrobacterium-mediated root transformation.</text>
</comment>
<comment type="subunit">
    <text evidence="1 4">Forms a complex with importin subunit beta-1 (By similarity). Interacts with A.tumefaciens VirD2 and VirE2 (PubMed:18836040).</text>
</comment>
<comment type="interaction">
    <interactant intactId="EBI-2131464">
        <id>O80480</id>
    </interactant>
    <interactant intactId="EBI-25519488">
        <id>Q9SZU7</id>
        <label>KAI2</label>
    </interactant>
    <organismsDiffer>false</organismsDiffer>
    <experiments>3</experiments>
</comment>
<comment type="interaction">
    <interactant intactId="EBI-2131464">
        <id>O80480</id>
    </interactant>
    <interactant intactId="EBI-4431752">
        <id>Q058P7</id>
    </interactant>
    <organismsDiffer>false</organismsDiffer>
    <experiments>2</experiments>
</comment>
<comment type="subcellular location">
    <subcellularLocation>
        <location evidence="1">Nucleus envelope</location>
    </subcellularLocation>
</comment>
<comment type="alternative products">
    <event type="alternative splicing"/>
    <isoform>
        <id>O80480-1</id>
        <name>1</name>
        <sequence type="displayed"/>
    </isoform>
    <isoform>
        <id>O80480-2</id>
        <name>2</name>
        <sequence type="described" ref="VSP_057335"/>
    </isoform>
</comment>
<comment type="similarity">
    <text evidence="6">Belongs to the importin alpha family.</text>
</comment>
<protein>
    <recommendedName>
        <fullName evidence="6">Importin subunit alpha-4</fullName>
        <shortName evidence="5">IMPa-4</shortName>
    </recommendedName>
</protein>
<proteinExistence type="evidence at protein level"/>
<reference key="1">
    <citation type="journal article" date="2000" name="Nature">
        <title>Sequence and analysis of chromosome 1 of the plant Arabidopsis thaliana.</title>
        <authorList>
            <person name="Theologis A."/>
            <person name="Ecker J.R."/>
            <person name="Palm C.J."/>
            <person name="Federspiel N.A."/>
            <person name="Kaul S."/>
            <person name="White O."/>
            <person name="Alonso J."/>
            <person name="Altafi H."/>
            <person name="Araujo R."/>
            <person name="Bowman C.L."/>
            <person name="Brooks S.Y."/>
            <person name="Buehler E."/>
            <person name="Chan A."/>
            <person name="Chao Q."/>
            <person name="Chen H."/>
            <person name="Cheuk R.F."/>
            <person name="Chin C.W."/>
            <person name="Chung M.K."/>
            <person name="Conn L."/>
            <person name="Conway A.B."/>
            <person name="Conway A.R."/>
            <person name="Creasy T.H."/>
            <person name="Dewar K."/>
            <person name="Dunn P."/>
            <person name="Etgu P."/>
            <person name="Feldblyum T.V."/>
            <person name="Feng J.-D."/>
            <person name="Fong B."/>
            <person name="Fujii C.Y."/>
            <person name="Gill J.E."/>
            <person name="Goldsmith A.D."/>
            <person name="Haas B."/>
            <person name="Hansen N.F."/>
            <person name="Hughes B."/>
            <person name="Huizar L."/>
            <person name="Hunter J.L."/>
            <person name="Jenkins J."/>
            <person name="Johnson-Hopson C."/>
            <person name="Khan S."/>
            <person name="Khaykin E."/>
            <person name="Kim C.J."/>
            <person name="Koo H.L."/>
            <person name="Kremenetskaia I."/>
            <person name="Kurtz D.B."/>
            <person name="Kwan A."/>
            <person name="Lam B."/>
            <person name="Langin-Hooper S."/>
            <person name="Lee A."/>
            <person name="Lee J.M."/>
            <person name="Lenz C.A."/>
            <person name="Li J.H."/>
            <person name="Li Y.-P."/>
            <person name="Lin X."/>
            <person name="Liu S.X."/>
            <person name="Liu Z.A."/>
            <person name="Luros J.S."/>
            <person name="Maiti R."/>
            <person name="Marziali A."/>
            <person name="Militscher J."/>
            <person name="Miranda M."/>
            <person name="Nguyen M."/>
            <person name="Nierman W.C."/>
            <person name="Osborne B.I."/>
            <person name="Pai G."/>
            <person name="Peterson J."/>
            <person name="Pham P.K."/>
            <person name="Rizzo M."/>
            <person name="Rooney T."/>
            <person name="Rowley D."/>
            <person name="Sakano H."/>
            <person name="Salzberg S.L."/>
            <person name="Schwartz J.R."/>
            <person name="Shinn P."/>
            <person name="Southwick A.M."/>
            <person name="Sun H."/>
            <person name="Tallon L.J."/>
            <person name="Tambunga G."/>
            <person name="Toriumi M.J."/>
            <person name="Town C.D."/>
            <person name="Utterback T."/>
            <person name="Van Aken S."/>
            <person name="Vaysberg M."/>
            <person name="Vysotskaia V.S."/>
            <person name="Walker M."/>
            <person name="Wu D."/>
            <person name="Yu G."/>
            <person name="Fraser C.M."/>
            <person name="Venter J.C."/>
            <person name="Davis R.W."/>
        </authorList>
    </citation>
    <scope>NUCLEOTIDE SEQUENCE [LARGE SCALE GENOMIC DNA]</scope>
    <source>
        <strain>cv. Columbia</strain>
    </source>
</reference>
<reference key="2">
    <citation type="journal article" date="2017" name="Plant J.">
        <title>Araport11: a complete reannotation of the Arabidopsis thaliana reference genome.</title>
        <authorList>
            <person name="Cheng C.Y."/>
            <person name="Krishnakumar V."/>
            <person name="Chan A.P."/>
            <person name="Thibaud-Nissen F."/>
            <person name="Schobel S."/>
            <person name="Town C.D."/>
        </authorList>
    </citation>
    <scope>GENOME REANNOTATION</scope>
    <source>
        <strain>cv. Columbia</strain>
    </source>
</reference>
<reference key="3">
    <citation type="journal article" date="2003" name="Science">
        <title>Empirical analysis of transcriptional activity in the Arabidopsis genome.</title>
        <authorList>
            <person name="Yamada K."/>
            <person name="Lim J."/>
            <person name="Dale J.M."/>
            <person name="Chen H."/>
            <person name="Shinn P."/>
            <person name="Palm C.J."/>
            <person name="Southwick A.M."/>
            <person name="Wu H.C."/>
            <person name="Kim C.J."/>
            <person name="Nguyen M."/>
            <person name="Pham P.K."/>
            <person name="Cheuk R.F."/>
            <person name="Karlin-Newmann G."/>
            <person name="Liu S.X."/>
            <person name="Lam B."/>
            <person name="Sakano H."/>
            <person name="Wu T."/>
            <person name="Yu G."/>
            <person name="Miranda M."/>
            <person name="Quach H.L."/>
            <person name="Tripp M."/>
            <person name="Chang C.H."/>
            <person name="Lee J.M."/>
            <person name="Toriumi M.J."/>
            <person name="Chan M.M."/>
            <person name="Tang C.C."/>
            <person name="Onodera C.S."/>
            <person name="Deng J.M."/>
            <person name="Akiyama K."/>
            <person name="Ansari Y."/>
            <person name="Arakawa T."/>
            <person name="Banh J."/>
            <person name="Banno F."/>
            <person name="Bowser L."/>
            <person name="Brooks S.Y."/>
            <person name="Carninci P."/>
            <person name="Chao Q."/>
            <person name="Choy N."/>
            <person name="Enju A."/>
            <person name="Goldsmith A.D."/>
            <person name="Gurjal M."/>
            <person name="Hansen N.F."/>
            <person name="Hayashizaki Y."/>
            <person name="Johnson-Hopson C."/>
            <person name="Hsuan V.W."/>
            <person name="Iida K."/>
            <person name="Karnes M."/>
            <person name="Khan S."/>
            <person name="Koesema E."/>
            <person name="Ishida J."/>
            <person name="Jiang P.X."/>
            <person name="Jones T."/>
            <person name="Kawai J."/>
            <person name="Kamiya A."/>
            <person name="Meyers C."/>
            <person name="Nakajima M."/>
            <person name="Narusaka M."/>
            <person name="Seki M."/>
            <person name="Sakurai T."/>
            <person name="Satou M."/>
            <person name="Tamse R."/>
            <person name="Vaysberg M."/>
            <person name="Wallender E.K."/>
            <person name="Wong C."/>
            <person name="Yamamura Y."/>
            <person name="Yuan S."/>
            <person name="Shinozaki K."/>
            <person name="Davis R.W."/>
            <person name="Theologis A."/>
            <person name="Ecker J.R."/>
        </authorList>
    </citation>
    <scope>NUCLEOTIDE SEQUENCE [LARGE SCALE MRNA] (ISOFORMS 1 AND 2)</scope>
    <source>
        <strain>cv. Columbia</strain>
    </source>
</reference>
<reference key="4">
    <citation type="journal article" date="2009" name="DNA Res.">
        <title>Analysis of multiple occurrences of alternative splicing events in Arabidopsis thaliana using novel sequenced full-length cDNAs.</title>
        <authorList>
            <person name="Iida K."/>
            <person name="Fukami-Kobayashi K."/>
            <person name="Toyoda A."/>
            <person name="Sakaki Y."/>
            <person name="Kobayashi M."/>
            <person name="Seki M."/>
            <person name="Shinozaki K."/>
        </authorList>
    </citation>
    <scope>NUCLEOTIDE SEQUENCE [LARGE SCALE MRNA] (ISOFORM 1)</scope>
    <source>
        <strain>cv. Columbia</strain>
    </source>
</reference>
<reference key="5">
    <citation type="online journal article" date="1998" name="Plant Gene Register">
        <title>Characterization of four cDNAs encoding different importin alpha homologues from Arabidopsis thaliana, designated AtIMPa1-4.</title>
        <authorList>
            <person name="Schledz M."/>
            <person name="Leclerc D."/>
            <person name="Neuhaus G."/>
            <person name="Merkle T."/>
        </authorList>
        <locator>PGR98-022</locator>
    </citation>
    <scope>NUCLEOTIDE SEQUENCE [MRNA] OF 10-537 (ISOFORM 1)</scope>
</reference>
<reference key="6">
    <citation type="journal article" date="2008" name="Plant Cell">
        <title>IMPa-4, an Arabidopsis importin alpha isoform, is preferentially involved in agrobacterium-mediated plant transformation.</title>
        <authorList>
            <person name="Bhattacharjee S."/>
            <person name="Lee L.Y."/>
            <person name="Oltmanns H."/>
            <person name="Cao H."/>
            <person name="Gupta V."/>
            <person name="Cuperus J."/>
            <person name="Gelvin S.B."/>
        </authorList>
    </citation>
    <scope>FUNCTION</scope>
    <scope>INTERACTION WITH AGROBACTERIUM VIRD2 AND VIRE2</scope>
    <scope>GENE FAMILY</scope>
</reference>
<keyword id="KW-0025">Alternative splicing</keyword>
<keyword id="KW-0539">Nucleus</keyword>
<keyword id="KW-0653">Protein transport</keyword>
<keyword id="KW-1185">Reference proteome</keyword>
<keyword id="KW-0677">Repeat</keyword>
<keyword id="KW-0813">Transport</keyword>
<feature type="chain" id="PRO_0000431570" description="Importin subunit alpha-4">
    <location>
        <begin position="1"/>
        <end position="538"/>
    </location>
</feature>
<feature type="domain" description="IBB" evidence="3">
    <location>
        <begin position="1"/>
        <end position="58"/>
    </location>
</feature>
<feature type="repeat" description="ARM 1" evidence="2">
    <location>
        <begin position="112"/>
        <end position="152"/>
    </location>
</feature>
<feature type="repeat" description="ARM 2" evidence="2">
    <location>
        <begin position="155"/>
        <end position="194"/>
    </location>
</feature>
<feature type="repeat" description="ARM 3" evidence="2">
    <location>
        <begin position="197"/>
        <end position="237"/>
    </location>
</feature>
<feature type="repeat" description="ARM 4" evidence="2">
    <location>
        <begin position="239"/>
        <end position="278"/>
    </location>
</feature>
<feature type="repeat" description="ARM 5" evidence="2">
    <location>
        <begin position="281"/>
        <end position="320"/>
    </location>
</feature>
<feature type="repeat" description="ARM 6" evidence="2">
    <location>
        <begin position="323"/>
        <end position="363"/>
    </location>
</feature>
<feature type="repeat" description="ARM 7" evidence="2">
    <location>
        <begin position="366"/>
        <end position="405"/>
    </location>
</feature>
<feature type="repeat" description="ARM 8" evidence="2">
    <location>
        <begin position="409"/>
        <end position="448"/>
    </location>
</feature>
<feature type="splice variant" id="VSP_057335" description="In isoform 2.">
    <location>
        <begin position="1"/>
        <end position="82"/>
    </location>
</feature>
<feature type="sequence conflict" description="In Ref. 5; CAA74966." evidence="6" ref="5">
    <original>LLTQ</original>
    <variation>CDA</variation>
    <location>
        <begin position="341"/>
        <end position="344"/>
    </location>
</feature>
<feature type="sequence conflict" description="In Ref. 5; CAA74966." evidence="6" ref="5">
    <original>A</original>
    <variation>G</variation>
    <location>
        <position position="521"/>
    </location>
</feature>
<accession>O80480</accession>
<accession>F4HZG6</accession>
<accession>O49602</accession>
<accession>Q94KD4</accession>
<gene>
    <name evidence="5" type="primary">IMPA4</name>
    <name evidence="7" type="ordered locus">At1g09270</name>
    <name evidence="8" type="ORF">T12M4.2</name>
</gene>
<dbReference type="EMBL" id="AC003114">
    <property type="protein sequence ID" value="AAC24079.1"/>
    <property type="molecule type" value="Genomic_DNA"/>
</dbReference>
<dbReference type="EMBL" id="CP002684">
    <property type="protein sequence ID" value="AEE28421.1"/>
    <property type="molecule type" value="Genomic_DNA"/>
</dbReference>
<dbReference type="EMBL" id="CP002684">
    <property type="protein sequence ID" value="AEE28422.1"/>
    <property type="molecule type" value="Genomic_DNA"/>
</dbReference>
<dbReference type="EMBL" id="CP002684">
    <property type="protein sequence ID" value="AEE28423.1"/>
    <property type="molecule type" value="Genomic_DNA"/>
</dbReference>
<dbReference type="EMBL" id="AF367284">
    <property type="protein sequence ID" value="AAK56273.1"/>
    <property type="molecule type" value="mRNA"/>
</dbReference>
<dbReference type="EMBL" id="AY090944">
    <property type="protein sequence ID" value="AAM13992.1"/>
    <property type="molecule type" value="mRNA"/>
</dbReference>
<dbReference type="EMBL" id="AY117313">
    <property type="protein sequence ID" value="AAM51388.1"/>
    <property type="molecule type" value="mRNA"/>
</dbReference>
<dbReference type="EMBL" id="AK316689">
    <property type="protein sequence ID" value="BAH19416.1"/>
    <property type="molecule type" value="mRNA"/>
</dbReference>
<dbReference type="EMBL" id="Y14616">
    <property type="protein sequence ID" value="CAA74966.1"/>
    <property type="molecule type" value="mRNA"/>
</dbReference>
<dbReference type="PIR" id="F86225">
    <property type="entry name" value="F86225"/>
</dbReference>
<dbReference type="PIR" id="T52101">
    <property type="entry name" value="T52101"/>
</dbReference>
<dbReference type="RefSeq" id="NP_001031011.1">
    <molecule id="O80480-2"/>
    <property type="nucleotide sequence ID" value="NM_001035934.2"/>
</dbReference>
<dbReference type="RefSeq" id="NP_172398.1">
    <molecule id="O80480-1"/>
    <property type="nucleotide sequence ID" value="NM_100797.6"/>
</dbReference>
<dbReference type="RefSeq" id="NP_849623.1">
    <molecule id="O80480-1"/>
    <property type="nucleotide sequence ID" value="NM_179292.3"/>
</dbReference>
<dbReference type="SMR" id="O80480"/>
<dbReference type="FunCoup" id="O80480">
    <property type="interactions" value="4270"/>
</dbReference>
<dbReference type="IntAct" id="O80480">
    <property type="interactions" value="9"/>
</dbReference>
<dbReference type="STRING" id="3702.O80480"/>
<dbReference type="PaxDb" id="3702-AT1G09270.1"/>
<dbReference type="ProteomicsDB" id="247013">
    <molecule id="O80480-1"/>
</dbReference>
<dbReference type="EnsemblPlants" id="AT1G09270.1">
    <molecule id="O80480-1"/>
    <property type="protein sequence ID" value="AT1G09270.1"/>
    <property type="gene ID" value="AT1G09270"/>
</dbReference>
<dbReference type="EnsemblPlants" id="AT1G09270.2">
    <molecule id="O80480-1"/>
    <property type="protein sequence ID" value="AT1G09270.2"/>
    <property type="gene ID" value="AT1G09270"/>
</dbReference>
<dbReference type="EnsemblPlants" id="AT1G09270.3">
    <molecule id="O80480-2"/>
    <property type="protein sequence ID" value="AT1G09270.3"/>
    <property type="gene ID" value="AT1G09270"/>
</dbReference>
<dbReference type="GeneID" id="837448"/>
<dbReference type="Gramene" id="AT1G09270.1">
    <molecule id="O80480-1"/>
    <property type="protein sequence ID" value="AT1G09270.1"/>
    <property type="gene ID" value="AT1G09270"/>
</dbReference>
<dbReference type="Gramene" id="AT1G09270.2">
    <molecule id="O80480-1"/>
    <property type="protein sequence ID" value="AT1G09270.2"/>
    <property type="gene ID" value="AT1G09270"/>
</dbReference>
<dbReference type="Gramene" id="AT1G09270.3">
    <molecule id="O80480-2"/>
    <property type="protein sequence ID" value="AT1G09270.3"/>
    <property type="gene ID" value="AT1G09270"/>
</dbReference>
<dbReference type="KEGG" id="ath:AT1G09270"/>
<dbReference type="Araport" id="AT1G09270"/>
<dbReference type="TAIR" id="AT1G09270">
    <property type="gene designation" value="IMPA-4"/>
</dbReference>
<dbReference type="eggNOG" id="KOG0166">
    <property type="taxonomic scope" value="Eukaryota"/>
</dbReference>
<dbReference type="HOGENOM" id="CLU_018084_5_0_1"/>
<dbReference type="InParanoid" id="O80480"/>
<dbReference type="OMA" id="MVRNATW"/>
<dbReference type="PhylomeDB" id="O80480"/>
<dbReference type="CD-CODE" id="4299E36E">
    <property type="entry name" value="Nucleolus"/>
</dbReference>
<dbReference type="PRO" id="PR:O80480"/>
<dbReference type="Proteomes" id="UP000006548">
    <property type="component" value="Chromosome 1"/>
</dbReference>
<dbReference type="ExpressionAtlas" id="O80480">
    <property type="expression patterns" value="baseline and differential"/>
</dbReference>
<dbReference type="GO" id="GO:0005737">
    <property type="term" value="C:cytoplasm"/>
    <property type="evidence" value="ECO:0007669"/>
    <property type="project" value="InterPro"/>
</dbReference>
<dbReference type="GO" id="GO:0043657">
    <property type="term" value="C:host cell"/>
    <property type="evidence" value="ECO:0007669"/>
    <property type="project" value="GOC"/>
</dbReference>
<dbReference type="GO" id="GO:0005635">
    <property type="term" value="C:nuclear envelope"/>
    <property type="evidence" value="ECO:0007669"/>
    <property type="project" value="UniProtKB-SubCell"/>
</dbReference>
<dbReference type="GO" id="GO:0061608">
    <property type="term" value="F:nuclear import signal receptor activity"/>
    <property type="evidence" value="ECO:0007669"/>
    <property type="project" value="InterPro"/>
</dbReference>
<dbReference type="GO" id="GO:0080034">
    <property type="term" value="P:host response to induction by symbiont of tumor, nodule or growth in host"/>
    <property type="evidence" value="ECO:0000315"/>
    <property type="project" value="TAIR"/>
</dbReference>
<dbReference type="GO" id="GO:0006606">
    <property type="term" value="P:protein import into nucleus"/>
    <property type="evidence" value="ECO:0007669"/>
    <property type="project" value="InterPro"/>
</dbReference>
<dbReference type="GO" id="GO:0030581">
    <property type="term" value="P:symbiont intracellular protein transport in host"/>
    <property type="evidence" value="ECO:0000353"/>
    <property type="project" value="TAIR"/>
</dbReference>
<dbReference type="FunFam" id="1.20.5.690:FF:000002">
    <property type="entry name" value="Importin subunit alpha"/>
    <property type="match status" value="1"/>
</dbReference>
<dbReference type="FunFam" id="1.25.10.10:FF:000040">
    <property type="entry name" value="Importin subunit alpha"/>
    <property type="match status" value="1"/>
</dbReference>
<dbReference type="Gene3D" id="1.20.5.690">
    <property type="entry name" value="Importin-alpha, importin-beta-binding domain"/>
    <property type="match status" value="1"/>
</dbReference>
<dbReference type="Gene3D" id="1.25.10.10">
    <property type="entry name" value="Leucine-rich Repeat Variant"/>
    <property type="match status" value="1"/>
</dbReference>
<dbReference type="InterPro" id="IPR011989">
    <property type="entry name" value="ARM-like"/>
</dbReference>
<dbReference type="InterPro" id="IPR016024">
    <property type="entry name" value="ARM-type_fold"/>
</dbReference>
<dbReference type="InterPro" id="IPR032413">
    <property type="entry name" value="Arm_3"/>
</dbReference>
<dbReference type="InterPro" id="IPR000225">
    <property type="entry name" value="Armadillo"/>
</dbReference>
<dbReference type="InterPro" id="IPR002652">
    <property type="entry name" value="Importin-a_IBB"/>
</dbReference>
<dbReference type="InterPro" id="IPR036975">
    <property type="entry name" value="Importin-a_IBB_sf"/>
</dbReference>
<dbReference type="InterPro" id="IPR024931">
    <property type="entry name" value="Importin_alpha"/>
</dbReference>
<dbReference type="PANTHER" id="PTHR23316">
    <property type="entry name" value="IMPORTIN ALPHA"/>
    <property type="match status" value="1"/>
</dbReference>
<dbReference type="Pfam" id="PF00514">
    <property type="entry name" value="Arm"/>
    <property type="match status" value="8"/>
</dbReference>
<dbReference type="Pfam" id="PF16186">
    <property type="entry name" value="Arm_3"/>
    <property type="match status" value="1"/>
</dbReference>
<dbReference type="Pfam" id="PF01749">
    <property type="entry name" value="IBB"/>
    <property type="match status" value="1"/>
</dbReference>
<dbReference type="PIRSF" id="PIRSF005673">
    <property type="entry name" value="Importin_alpha"/>
    <property type="match status" value="1"/>
</dbReference>
<dbReference type="SMART" id="SM00185">
    <property type="entry name" value="ARM"/>
    <property type="match status" value="8"/>
</dbReference>
<dbReference type="SUPFAM" id="SSF48371">
    <property type="entry name" value="ARM repeat"/>
    <property type="match status" value="1"/>
</dbReference>
<dbReference type="PROSITE" id="PS50176">
    <property type="entry name" value="ARM_REPEAT"/>
    <property type="match status" value="3"/>
</dbReference>
<dbReference type="PROSITE" id="PS51214">
    <property type="entry name" value="IBB"/>
    <property type="match status" value="1"/>
</dbReference>
<name>IMPA4_ARATH</name>
<evidence type="ECO:0000250" key="1">
    <source>
        <dbReference type="UniProtKB" id="Q96321"/>
    </source>
</evidence>
<evidence type="ECO:0000255" key="2"/>
<evidence type="ECO:0000255" key="3">
    <source>
        <dbReference type="PROSITE-ProRule" id="PRU00561"/>
    </source>
</evidence>
<evidence type="ECO:0000269" key="4">
    <source>
    </source>
</evidence>
<evidence type="ECO:0000303" key="5">
    <source>
    </source>
</evidence>
<evidence type="ECO:0000305" key="6"/>
<evidence type="ECO:0000312" key="7">
    <source>
        <dbReference type="Araport" id="AT1G09270"/>
    </source>
</evidence>
<evidence type="ECO:0000312" key="8">
    <source>
        <dbReference type="EMBL" id="AAC24079.1"/>
    </source>
</evidence>